<protein>
    <recommendedName>
        <fullName>Amino-acid acetyltransferase, mitochondrial</fullName>
        <ecNumber>2.3.1.1</ecNumber>
    </recommendedName>
    <alternativeName>
        <fullName>Arginine-requiring protein 2</fullName>
    </alternativeName>
    <alternativeName>
        <fullName>Glutamate N-acetyltransferase</fullName>
    </alternativeName>
    <alternativeName>
        <fullName>N-acetylglutamate synthase</fullName>
        <shortName>AGS</shortName>
        <shortName>NAGS</shortName>
    </alternativeName>
</protein>
<comment type="function">
    <text evidence="1">N-acetylglutamate synthase involved in arginine biosynthesis.</text>
</comment>
<comment type="catalytic activity">
    <reaction>
        <text>L-glutamate + acetyl-CoA = N-acetyl-L-glutamate + CoA + H(+)</text>
        <dbReference type="Rhea" id="RHEA:24292"/>
        <dbReference type="ChEBI" id="CHEBI:15378"/>
        <dbReference type="ChEBI" id="CHEBI:29985"/>
        <dbReference type="ChEBI" id="CHEBI:44337"/>
        <dbReference type="ChEBI" id="CHEBI:57287"/>
        <dbReference type="ChEBI" id="CHEBI:57288"/>
        <dbReference type="EC" id="2.3.1.1"/>
    </reaction>
</comment>
<comment type="pathway">
    <text>Amino-acid biosynthesis; L-arginine biosynthesis; N(2)-acetyl-L-ornithine from L-glutamate: step 1/4.</text>
</comment>
<comment type="subcellular location">
    <subcellularLocation>
        <location evidence="1">Mitochondrion</location>
    </subcellularLocation>
</comment>
<comment type="similarity">
    <text evidence="5">Belongs to the acetyltransferase family.</text>
</comment>
<accession>A6RBX7</accession>
<dbReference type="EC" id="2.3.1.1"/>
<dbReference type="EMBL" id="CH476662">
    <property type="protein sequence ID" value="EDN10674.1"/>
    <property type="molecule type" value="Genomic_DNA"/>
</dbReference>
<dbReference type="STRING" id="339724.A6RBX7"/>
<dbReference type="KEGG" id="aje:HCAG_07135"/>
<dbReference type="VEuPathDB" id="FungiDB:HCAG_07135"/>
<dbReference type="HOGENOM" id="CLU_013088_0_0_1"/>
<dbReference type="OMA" id="NAMVRDC"/>
<dbReference type="OrthoDB" id="5037at299071"/>
<dbReference type="UniPathway" id="UPA00068">
    <property type="reaction ID" value="UER00106"/>
</dbReference>
<dbReference type="Proteomes" id="UP000009297">
    <property type="component" value="Unassembled WGS sequence"/>
</dbReference>
<dbReference type="GO" id="GO:0005759">
    <property type="term" value="C:mitochondrial matrix"/>
    <property type="evidence" value="ECO:0007669"/>
    <property type="project" value="TreeGrafter"/>
</dbReference>
<dbReference type="GO" id="GO:0004042">
    <property type="term" value="F:L-glutamate N-acetyltransferase activity"/>
    <property type="evidence" value="ECO:0007669"/>
    <property type="project" value="InterPro"/>
</dbReference>
<dbReference type="GO" id="GO:0006526">
    <property type="term" value="P:L-arginine biosynthetic process"/>
    <property type="evidence" value="ECO:0007669"/>
    <property type="project" value="UniProtKB-UniPathway"/>
</dbReference>
<dbReference type="GO" id="GO:0006592">
    <property type="term" value="P:ornithine biosynthetic process"/>
    <property type="evidence" value="ECO:0007669"/>
    <property type="project" value="TreeGrafter"/>
</dbReference>
<dbReference type="FunFam" id="3.40.630.30:FF:000049">
    <property type="entry name" value="Amino-acid acetyltransferase, mitochondrial"/>
    <property type="match status" value="1"/>
</dbReference>
<dbReference type="Gene3D" id="3.40.630.30">
    <property type="match status" value="1"/>
</dbReference>
<dbReference type="Gene3D" id="3.40.1160.10">
    <property type="entry name" value="Acetylglutamate kinase-like"/>
    <property type="match status" value="1"/>
</dbReference>
<dbReference type="InterPro" id="IPR036393">
    <property type="entry name" value="AceGlu_kinase-like_sf"/>
</dbReference>
<dbReference type="InterPro" id="IPR011190">
    <property type="entry name" value="GlcNAc_Synth_fun"/>
</dbReference>
<dbReference type="InterPro" id="IPR006855">
    <property type="entry name" value="Vertebrate-like_GNAT_dom"/>
</dbReference>
<dbReference type="PANTHER" id="PTHR23342:SF4">
    <property type="entry name" value="AMINO-ACID ACETYLTRANSFERASE, MITOCHONDRIAL"/>
    <property type="match status" value="1"/>
</dbReference>
<dbReference type="PANTHER" id="PTHR23342">
    <property type="entry name" value="N-ACETYLGLUTAMATE SYNTHASE"/>
    <property type="match status" value="1"/>
</dbReference>
<dbReference type="Pfam" id="PF04768">
    <property type="entry name" value="NAT"/>
    <property type="match status" value="1"/>
</dbReference>
<dbReference type="PIRSF" id="PIRSF007892">
    <property type="entry name" value="NAGS_fungal"/>
    <property type="match status" value="1"/>
</dbReference>
<dbReference type="PROSITE" id="PS51731">
    <property type="entry name" value="GNAT_NAGS"/>
    <property type="match status" value="1"/>
</dbReference>
<name>NAGS_AJECN</name>
<organism>
    <name type="scientific">Ajellomyces capsulatus (strain NAm1 / WU24)</name>
    <name type="common">Darling's disease fungus</name>
    <name type="synonym">Histoplasma capsulatum</name>
    <dbReference type="NCBI Taxonomy" id="2059318"/>
    <lineage>
        <taxon>Eukaryota</taxon>
        <taxon>Fungi</taxon>
        <taxon>Dikarya</taxon>
        <taxon>Ascomycota</taxon>
        <taxon>Pezizomycotina</taxon>
        <taxon>Eurotiomycetes</taxon>
        <taxon>Eurotiomycetidae</taxon>
        <taxon>Onygenales</taxon>
        <taxon>Ajellomycetaceae</taxon>
        <taxon>Histoplasma</taxon>
    </lineage>
</organism>
<evidence type="ECO:0000250" key="1"/>
<evidence type="ECO:0000255" key="2"/>
<evidence type="ECO:0000255" key="3">
    <source>
        <dbReference type="PROSITE-ProRule" id="PRU00532"/>
    </source>
</evidence>
<evidence type="ECO:0000256" key="4">
    <source>
        <dbReference type="SAM" id="MobiDB-lite"/>
    </source>
</evidence>
<evidence type="ECO:0000305" key="5"/>
<sequence>MYDEPSDIVRLVSTVIVSESEHIPVLAIIDFFFSLLSSASTKREAQSYLSRFKAEKPEPAKSPPEQSAMGYPSTNFVQSGVNLGGGMFGMAGVIDNHAMFRQESALGKSLPIETVSEETLHIALVKIREPQLLNDQTLGEVGRTLSQLSLLGMSCCVVIDPGLPQSDTFWRNRSIKQADRMLAAIEKNGVDSRRLDDVIRLAPSPKHALSVVSRELILSPLRRGKIAVIPPIGYTEGTLRAVPVLADDVVLALTREFTGLGVKARPEDNPHELARRISKLQKEVSVDRLIILDPAGGIPSLKRASKSHVFVNLEQEFEEITNELREGMAAGDSLVTGDKNENGQQILSLEKSNPLSTVVEREGAASLPSELQVTSSDRSSVHIPDFERHLDNLTLLHNALTYLPPASSGIISIPQDATNSASEPRDPSQLSTVATRRKRNPLIHNLLTDKPSHSASLPAGRLRANNGCSSQNNFQVMHSTFVKKGMPLTLFPDPRVHIWKPPINGKSRMTLNDPHIDLPRLVQLIEDSFNRKLDVQHYLNRVSDRLAGLIIAGEYEGGAVLTWELPPGVPNDGSEESRSRMVPYLDKFTVLKRSQGAGGVADIVFNAMVRTCLPKGVCWRSRRDNPVNKWYFERARGTWKLPGSNWTMFWTTDGVLEGDRLFRDYEGVCRGIEPSWLDNKHVVD</sequence>
<feature type="transit peptide" description="Mitochondrion" evidence="2">
    <location>
        <begin position="1"/>
        <end status="unknown"/>
    </location>
</feature>
<feature type="chain" id="PRO_0000372547" description="Amino-acid acetyltransferase, mitochondrial">
    <location>
        <begin status="unknown"/>
        <end position="684"/>
    </location>
</feature>
<feature type="domain" description="N-acetyltransferase" evidence="3">
    <location>
        <begin position="505"/>
        <end position="674"/>
    </location>
</feature>
<feature type="region of interest" description="Disordered" evidence="4">
    <location>
        <begin position="414"/>
        <end position="439"/>
    </location>
</feature>
<feature type="compositionally biased region" description="Polar residues" evidence="4">
    <location>
        <begin position="415"/>
        <end position="434"/>
    </location>
</feature>
<proteinExistence type="inferred from homology"/>
<keyword id="KW-0012">Acyltransferase</keyword>
<keyword id="KW-0028">Amino-acid biosynthesis</keyword>
<keyword id="KW-0496">Mitochondrion</keyword>
<keyword id="KW-1185">Reference proteome</keyword>
<keyword id="KW-0808">Transferase</keyword>
<keyword id="KW-0809">Transit peptide</keyword>
<gene>
    <name type="primary">ARG2</name>
    <name type="ORF">HCAG_07135</name>
</gene>
<reference key="1">
    <citation type="journal article" date="2009" name="Genome Res.">
        <title>Comparative genomic analyses of the human fungal pathogens Coccidioides and their relatives.</title>
        <authorList>
            <person name="Sharpton T.J."/>
            <person name="Stajich J.E."/>
            <person name="Rounsley S.D."/>
            <person name="Gardner M.J."/>
            <person name="Wortman J.R."/>
            <person name="Jordar V.S."/>
            <person name="Maiti R."/>
            <person name="Kodira C.D."/>
            <person name="Neafsey D.E."/>
            <person name="Zeng Q."/>
            <person name="Hung C.-Y."/>
            <person name="McMahan C."/>
            <person name="Muszewska A."/>
            <person name="Grynberg M."/>
            <person name="Mandel M.A."/>
            <person name="Kellner E.M."/>
            <person name="Barker B.M."/>
            <person name="Galgiani J.N."/>
            <person name="Orbach M.J."/>
            <person name="Kirkland T.N."/>
            <person name="Cole G.T."/>
            <person name="Henn M.R."/>
            <person name="Birren B.W."/>
            <person name="Taylor J.W."/>
        </authorList>
    </citation>
    <scope>NUCLEOTIDE SEQUENCE [LARGE SCALE GENOMIC DNA]</scope>
    <source>
        <strain>NAm1 / WU24</strain>
    </source>
</reference>